<name>RS19_ECO81</name>
<accession>B7N1A0</accession>
<sequence>MPRSLKKGPFIDLHLLKKVEKAVESGDKKPLRTWSRRSTIFPNMIGLTIAVHNGRQHVPVFVTDEMVGHKLGEFAPTRTYRGHAADKKAKKK</sequence>
<feature type="chain" id="PRO_1000146391" description="Small ribosomal subunit protein uS19">
    <location>
        <begin position="1"/>
        <end position="92"/>
    </location>
</feature>
<keyword id="KW-0687">Ribonucleoprotein</keyword>
<keyword id="KW-0689">Ribosomal protein</keyword>
<keyword id="KW-0694">RNA-binding</keyword>
<keyword id="KW-0699">rRNA-binding</keyword>
<protein>
    <recommendedName>
        <fullName evidence="1">Small ribosomal subunit protein uS19</fullName>
    </recommendedName>
    <alternativeName>
        <fullName evidence="2">30S ribosomal protein S19</fullName>
    </alternativeName>
</protein>
<reference key="1">
    <citation type="journal article" date="2009" name="PLoS Genet.">
        <title>Organised genome dynamics in the Escherichia coli species results in highly diverse adaptive paths.</title>
        <authorList>
            <person name="Touchon M."/>
            <person name="Hoede C."/>
            <person name="Tenaillon O."/>
            <person name="Barbe V."/>
            <person name="Baeriswyl S."/>
            <person name="Bidet P."/>
            <person name="Bingen E."/>
            <person name="Bonacorsi S."/>
            <person name="Bouchier C."/>
            <person name="Bouvet O."/>
            <person name="Calteau A."/>
            <person name="Chiapello H."/>
            <person name="Clermont O."/>
            <person name="Cruveiller S."/>
            <person name="Danchin A."/>
            <person name="Diard M."/>
            <person name="Dossat C."/>
            <person name="Karoui M.E."/>
            <person name="Frapy E."/>
            <person name="Garry L."/>
            <person name="Ghigo J.M."/>
            <person name="Gilles A.M."/>
            <person name="Johnson J."/>
            <person name="Le Bouguenec C."/>
            <person name="Lescat M."/>
            <person name="Mangenot S."/>
            <person name="Martinez-Jehanne V."/>
            <person name="Matic I."/>
            <person name="Nassif X."/>
            <person name="Oztas S."/>
            <person name="Petit M.A."/>
            <person name="Pichon C."/>
            <person name="Rouy Z."/>
            <person name="Ruf C.S."/>
            <person name="Schneider D."/>
            <person name="Tourret J."/>
            <person name="Vacherie B."/>
            <person name="Vallenet D."/>
            <person name="Medigue C."/>
            <person name="Rocha E.P.C."/>
            <person name="Denamur E."/>
        </authorList>
    </citation>
    <scope>NUCLEOTIDE SEQUENCE [LARGE SCALE GENOMIC DNA]</scope>
    <source>
        <strain>ED1a</strain>
    </source>
</reference>
<proteinExistence type="inferred from homology"/>
<organism>
    <name type="scientific">Escherichia coli O81 (strain ED1a)</name>
    <dbReference type="NCBI Taxonomy" id="585397"/>
    <lineage>
        <taxon>Bacteria</taxon>
        <taxon>Pseudomonadati</taxon>
        <taxon>Pseudomonadota</taxon>
        <taxon>Gammaproteobacteria</taxon>
        <taxon>Enterobacterales</taxon>
        <taxon>Enterobacteriaceae</taxon>
        <taxon>Escherichia</taxon>
    </lineage>
</organism>
<evidence type="ECO:0000255" key="1">
    <source>
        <dbReference type="HAMAP-Rule" id="MF_00531"/>
    </source>
</evidence>
<evidence type="ECO:0000305" key="2"/>
<dbReference type="EMBL" id="CU928162">
    <property type="protein sequence ID" value="CAR10118.2"/>
    <property type="molecule type" value="Genomic_DNA"/>
</dbReference>
<dbReference type="RefSeq" id="WP_001138117.1">
    <property type="nucleotide sequence ID" value="NC_011745.1"/>
</dbReference>
<dbReference type="SMR" id="B7N1A0"/>
<dbReference type="GeneID" id="98390438"/>
<dbReference type="KEGG" id="ecq:ECED1_3979"/>
<dbReference type="HOGENOM" id="CLU_144911_0_1_6"/>
<dbReference type="Proteomes" id="UP000000748">
    <property type="component" value="Chromosome"/>
</dbReference>
<dbReference type="GO" id="GO:0005737">
    <property type="term" value="C:cytoplasm"/>
    <property type="evidence" value="ECO:0007669"/>
    <property type="project" value="UniProtKB-ARBA"/>
</dbReference>
<dbReference type="GO" id="GO:0015935">
    <property type="term" value="C:small ribosomal subunit"/>
    <property type="evidence" value="ECO:0007669"/>
    <property type="project" value="InterPro"/>
</dbReference>
<dbReference type="GO" id="GO:0019843">
    <property type="term" value="F:rRNA binding"/>
    <property type="evidence" value="ECO:0007669"/>
    <property type="project" value="UniProtKB-UniRule"/>
</dbReference>
<dbReference type="GO" id="GO:0003735">
    <property type="term" value="F:structural constituent of ribosome"/>
    <property type="evidence" value="ECO:0007669"/>
    <property type="project" value="InterPro"/>
</dbReference>
<dbReference type="GO" id="GO:0000028">
    <property type="term" value="P:ribosomal small subunit assembly"/>
    <property type="evidence" value="ECO:0007669"/>
    <property type="project" value="TreeGrafter"/>
</dbReference>
<dbReference type="GO" id="GO:0006412">
    <property type="term" value="P:translation"/>
    <property type="evidence" value="ECO:0007669"/>
    <property type="project" value="UniProtKB-UniRule"/>
</dbReference>
<dbReference type="FunFam" id="3.30.860.10:FF:000001">
    <property type="entry name" value="30S ribosomal protein S19"/>
    <property type="match status" value="1"/>
</dbReference>
<dbReference type="Gene3D" id="3.30.860.10">
    <property type="entry name" value="30s Ribosomal Protein S19, Chain A"/>
    <property type="match status" value="1"/>
</dbReference>
<dbReference type="HAMAP" id="MF_00531">
    <property type="entry name" value="Ribosomal_uS19"/>
    <property type="match status" value="1"/>
</dbReference>
<dbReference type="InterPro" id="IPR002222">
    <property type="entry name" value="Ribosomal_uS19"/>
</dbReference>
<dbReference type="InterPro" id="IPR005732">
    <property type="entry name" value="Ribosomal_uS19_bac-type"/>
</dbReference>
<dbReference type="InterPro" id="IPR020934">
    <property type="entry name" value="Ribosomal_uS19_CS"/>
</dbReference>
<dbReference type="InterPro" id="IPR023575">
    <property type="entry name" value="Ribosomal_uS19_SF"/>
</dbReference>
<dbReference type="NCBIfam" id="TIGR01050">
    <property type="entry name" value="rpsS_bact"/>
    <property type="match status" value="1"/>
</dbReference>
<dbReference type="PANTHER" id="PTHR11880">
    <property type="entry name" value="RIBOSOMAL PROTEIN S19P FAMILY MEMBER"/>
    <property type="match status" value="1"/>
</dbReference>
<dbReference type="PANTHER" id="PTHR11880:SF8">
    <property type="entry name" value="SMALL RIBOSOMAL SUBUNIT PROTEIN US19M"/>
    <property type="match status" value="1"/>
</dbReference>
<dbReference type="Pfam" id="PF00203">
    <property type="entry name" value="Ribosomal_S19"/>
    <property type="match status" value="1"/>
</dbReference>
<dbReference type="PIRSF" id="PIRSF002144">
    <property type="entry name" value="Ribosomal_S19"/>
    <property type="match status" value="1"/>
</dbReference>
<dbReference type="PRINTS" id="PR00975">
    <property type="entry name" value="RIBOSOMALS19"/>
</dbReference>
<dbReference type="SUPFAM" id="SSF54570">
    <property type="entry name" value="Ribosomal protein S19"/>
    <property type="match status" value="1"/>
</dbReference>
<dbReference type="PROSITE" id="PS00323">
    <property type="entry name" value="RIBOSOMAL_S19"/>
    <property type="match status" value="1"/>
</dbReference>
<gene>
    <name evidence="1" type="primary">rpsS</name>
    <name type="ordered locus">ECED1_3979</name>
</gene>
<comment type="function">
    <text evidence="1">Protein S19 forms a complex with S13 that binds strongly to the 16S ribosomal RNA.</text>
</comment>
<comment type="similarity">
    <text evidence="1">Belongs to the universal ribosomal protein uS19 family.</text>
</comment>